<gene>
    <name type="primary">Sorcs3</name>
</gene>
<feature type="signal peptide" evidence="2">
    <location>
        <begin position="1"/>
        <end position="33"/>
    </location>
</feature>
<feature type="chain" id="PRO_0000033175" description="VPS10 domain-containing receptor SorCS3">
    <location>
        <begin position="34"/>
        <end position="1219"/>
    </location>
</feature>
<feature type="propeptide" id="PRO_0000462588" description="Removed in mature form" evidence="1">
    <location>
        <begin position="34"/>
        <end position="130"/>
    </location>
</feature>
<feature type="topological domain" description="Lumenal" evidence="2">
    <location>
        <begin position="34"/>
        <end position="1122"/>
    </location>
</feature>
<feature type="transmembrane region" description="Helical" evidence="2">
    <location>
        <begin position="1123"/>
        <end position="1143"/>
    </location>
</feature>
<feature type="topological domain" description="Cytoplasmic" evidence="2">
    <location>
        <begin position="1144"/>
        <end position="1219"/>
    </location>
</feature>
<feature type="repeat" description="BNR 1">
    <location>
        <begin position="228"/>
        <end position="239"/>
    </location>
</feature>
<feature type="repeat" description="BNR 2">
    <location>
        <begin position="276"/>
        <end position="287"/>
    </location>
</feature>
<feature type="repeat" description="BNR 3">
    <location>
        <begin position="317"/>
        <end position="328"/>
    </location>
</feature>
<feature type="repeat" description="BNR 4">
    <location>
        <begin position="512"/>
        <end position="523"/>
    </location>
</feature>
<feature type="repeat" description="BNR 5">
    <location>
        <begin position="589"/>
        <end position="600"/>
    </location>
</feature>
<feature type="repeat" description="BNR 6">
    <location>
        <begin position="631"/>
        <end position="642"/>
    </location>
</feature>
<feature type="domain" description="PKD" evidence="3">
    <location>
        <begin position="824"/>
        <end position="914"/>
    </location>
</feature>
<feature type="region of interest" description="Disordered" evidence="4">
    <location>
        <begin position="71"/>
        <end position="181"/>
    </location>
</feature>
<feature type="region of interest" description="Interaction with DLG4" evidence="5">
    <location>
        <begin position="1216"/>
        <end position="1219"/>
    </location>
</feature>
<feature type="glycosylation site" description="N-linked (GlcNAc...) asparagine" evidence="2">
    <location>
        <position position="204"/>
    </location>
</feature>
<feature type="glycosylation site" description="N-linked (GlcNAc...) asparagine" evidence="2">
    <location>
        <position position="453"/>
    </location>
</feature>
<feature type="glycosylation site" description="N-linked (GlcNAc...) asparagine" evidence="2">
    <location>
        <position position="786"/>
    </location>
</feature>
<feature type="glycosylation site" description="N-linked (GlcNAc...) asparagine" evidence="2">
    <location>
        <position position="797"/>
    </location>
</feature>
<feature type="glycosylation site" description="N-linked (GlcNAc...) asparagine" evidence="2">
    <location>
        <position position="837"/>
    </location>
</feature>
<feature type="glycosylation site" description="N-linked (GlcNAc...) asparagine" evidence="2">
    <location>
        <position position="929"/>
    </location>
</feature>
<feature type="glycosylation site" description="N-linked (GlcNAc...) asparagine" evidence="2">
    <location>
        <position position="950"/>
    </location>
</feature>
<dbReference type="EMBL" id="AF276314">
    <property type="protein sequence ID" value="AAL36983.1"/>
    <property type="molecule type" value="mRNA"/>
</dbReference>
<dbReference type="EMBL" id="AK020713">
    <property type="status" value="NOT_ANNOTATED_CDS"/>
    <property type="molecule type" value="mRNA"/>
</dbReference>
<dbReference type="CCDS" id="CCDS38020.1"/>
<dbReference type="RefSeq" id="NP_079972.1">
    <property type="nucleotide sequence ID" value="NM_025696.3"/>
</dbReference>
<dbReference type="SMR" id="Q8VI51"/>
<dbReference type="FunCoup" id="Q8VI51">
    <property type="interactions" value="148"/>
</dbReference>
<dbReference type="STRING" id="10090.ENSMUSP00000077919"/>
<dbReference type="GlyConnect" id="2825">
    <property type="glycosylation" value="3 N-Linked glycans (2 sites)"/>
</dbReference>
<dbReference type="GlyCosmos" id="Q8VI51">
    <property type="glycosylation" value="7 sites, 3 glycans"/>
</dbReference>
<dbReference type="GlyGen" id="Q8VI51">
    <property type="glycosylation" value="8 sites, 5 N-linked glycans (4 sites), 1 O-linked glycan (1 site)"/>
</dbReference>
<dbReference type="iPTMnet" id="Q8VI51"/>
<dbReference type="PhosphoSitePlus" id="Q8VI51"/>
<dbReference type="PaxDb" id="10090-ENSMUSP00000077919"/>
<dbReference type="ProteomicsDB" id="258710"/>
<dbReference type="Antibodypedia" id="31628">
    <property type="antibodies" value="63 antibodies from 14 providers"/>
</dbReference>
<dbReference type="DNASU" id="66673"/>
<dbReference type="Ensembl" id="ENSMUST00000078880.6">
    <property type="protein sequence ID" value="ENSMUSP00000077919.6"/>
    <property type="gene ID" value="ENSMUSG00000063434.7"/>
</dbReference>
<dbReference type="GeneID" id="66673"/>
<dbReference type="KEGG" id="mmu:66673"/>
<dbReference type="UCSC" id="uc008hvx.1">
    <property type="organism name" value="mouse"/>
</dbReference>
<dbReference type="AGR" id="MGI:1913923"/>
<dbReference type="CTD" id="22986"/>
<dbReference type="MGI" id="MGI:1913923">
    <property type="gene designation" value="Sorcs3"/>
</dbReference>
<dbReference type="VEuPathDB" id="HostDB:ENSMUSG00000063434"/>
<dbReference type="eggNOG" id="KOG3511">
    <property type="taxonomic scope" value="Eukaryota"/>
</dbReference>
<dbReference type="GeneTree" id="ENSGT01030000234563"/>
<dbReference type="HOGENOM" id="CLU_010702_0_0_1"/>
<dbReference type="InParanoid" id="Q8VI51"/>
<dbReference type="OMA" id="RRNDGNC"/>
<dbReference type="OrthoDB" id="443634at2759"/>
<dbReference type="PhylomeDB" id="Q8VI51"/>
<dbReference type="TreeFam" id="TF324918"/>
<dbReference type="BioGRID-ORCS" id="66673">
    <property type="hits" value="4 hits in 77 CRISPR screens"/>
</dbReference>
<dbReference type="ChiTaRS" id="Sorcs3">
    <property type="organism name" value="mouse"/>
</dbReference>
<dbReference type="PRO" id="PR:Q8VI51"/>
<dbReference type="Proteomes" id="UP000000589">
    <property type="component" value="Chromosome 19"/>
</dbReference>
<dbReference type="RNAct" id="Q8VI51">
    <property type="molecule type" value="protein"/>
</dbReference>
<dbReference type="Bgee" id="ENSMUSG00000063434">
    <property type="expression patterns" value="Expressed in dorsal lateral geniculate nucleus and 104 other cell types or tissues"/>
</dbReference>
<dbReference type="ExpressionAtlas" id="Q8VI51">
    <property type="expression patterns" value="baseline and differential"/>
</dbReference>
<dbReference type="GO" id="GO:0098978">
    <property type="term" value="C:glutamatergic synapse"/>
    <property type="evidence" value="ECO:0000314"/>
    <property type="project" value="SynGO"/>
</dbReference>
<dbReference type="GO" id="GO:0014069">
    <property type="term" value="C:postsynaptic density"/>
    <property type="evidence" value="ECO:0000314"/>
    <property type="project" value="MGI"/>
</dbReference>
<dbReference type="GO" id="GO:0098839">
    <property type="term" value="C:postsynaptic density membrane"/>
    <property type="evidence" value="ECO:0000314"/>
    <property type="project" value="SynGO"/>
</dbReference>
<dbReference type="GO" id="GO:0007612">
    <property type="term" value="P:learning"/>
    <property type="evidence" value="ECO:0000315"/>
    <property type="project" value="MGI"/>
</dbReference>
<dbReference type="GO" id="GO:0007613">
    <property type="term" value="P:memory"/>
    <property type="evidence" value="ECO:0000315"/>
    <property type="project" value="MGI"/>
</dbReference>
<dbReference type="GO" id="GO:0099170">
    <property type="term" value="P:postsynaptic modulation of chemical synaptic transmission"/>
    <property type="evidence" value="ECO:0000314"/>
    <property type="project" value="SynGO"/>
</dbReference>
<dbReference type="GO" id="GO:1900452">
    <property type="term" value="P:regulation of long-term synaptic depression"/>
    <property type="evidence" value="ECO:0000315"/>
    <property type="project" value="MGI"/>
</dbReference>
<dbReference type="FunFam" id="3.30.60.270:FF:000001">
    <property type="entry name" value="Sortilin related VPS10 domain containing receptor 1"/>
    <property type="match status" value="1"/>
</dbReference>
<dbReference type="FunFam" id="2.60.40.10:FF:000083">
    <property type="entry name" value="Sortilin-related VPS10 domain containing receptor 2"/>
    <property type="match status" value="1"/>
</dbReference>
<dbReference type="FunFam" id="2.10.70.80:FF:000001">
    <property type="entry name" value="Sortilin-related VPS10 domain-containing receptor 1"/>
    <property type="match status" value="1"/>
</dbReference>
<dbReference type="FunFam" id="2.130.10.10:FF:000388">
    <property type="entry name" value="VPS10 domain-containing receptor SorCS3"/>
    <property type="match status" value="1"/>
</dbReference>
<dbReference type="Gene3D" id="2.10.70.80">
    <property type="match status" value="1"/>
</dbReference>
<dbReference type="Gene3D" id="3.30.60.270">
    <property type="match status" value="1"/>
</dbReference>
<dbReference type="Gene3D" id="2.60.40.10">
    <property type="entry name" value="Immunoglobulins"/>
    <property type="match status" value="1"/>
</dbReference>
<dbReference type="Gene3D" id="2.130.10.10">
    <property type="entry name" value="YVTN repeat-like/Quinoprotein amine dehydrogenase"/>
    <property type="match status" value="1"/>
</dbReference>
<dbReference type="InterPro" id="IPR013783">
    <property type="entry name" value="Ig-like_fold"/>
</dbReference>
<dbReference type="InterPro" id="IPR000601">
    <property type="entry name" value="PKD_dom"/>
</dbReference>
<dbReference type="InterPro" id="IPR035986">
    <property type="entry name" value="PKD_dom_sf"/>
</dbReference>
<dbReference type="InterPro" id="IPR031777">
    <property type="entry name" value="Sortilin_C"/>
</dbReference>
<dbReference type="InterPro" id="IPR031778">
    <property type="entry name" value="Sortilin_N"/>
</dbReference>
<dbReference type="InterPro" id="IPR006581">
    <property type="entry name" value="VPS10"/>
</dbReference>
<dbReference type="InterPro" id="IPR050310">
    <property type="entry name" value="VPS10-sortilin"/>
</dbReference>
<dbReference type="InterPro" id="IPR015943">
    <property type="entry name" value="WD40/YVTN_repeat-like_dom_sf"/>
</dbReference>
<dbReference type="PANTHER" id="PTHR12106">
    <property type="entry name" value="SORTILIN RELATED"/>
    <property type="match status" value="1"/>
</dbReference>
<dbReference type="PANTHER" id="PTHR12106:SF10">
    <property type="entry name" value="VPS10 DOMAIN-CONTAINING RECEPTOR SORCS3"/>
    <property type="match status" value="1"/>
</dbReference>
<dbReference type="Pfam" id="PF00801">
    <property type="entry name" value="PKD"/>
    <property type="match status" value="1"/>
</dbReference>
<dbReference type="Pfam" id="PF15902">
    <property type="entry name" value="Sortilin-Vps10"/>
    <property type="match status" value="1"/>
</dbReference>
<dbReference type="Pfam" id="PF15901">
    <property type="entry name" value="Sortilin_C"/>
    <property type="match status" value="1"/>
</dbReference>
<dbReference type="SMART" id="SM00602">
    <property type="entry name" value="VPS10"/>
    <property type="match status" value="1"/>
</dbReference>
<dbReference type="SUPFAM" id="SSF110296">
    <property type="entry name" value="Oligoxyloglucan reducing end-specific cellobiohydrolase"/>
    <property type="match status" value="1"/>
</dbReference>
<dbReference type="SUPFAM" id="SSF49299">
    <property type="entry name" value="PKD domain"/>
    <property type="match status" value="2"/>
</dbReference>
<dbReference type="PROSITE" id="PS50093">
    <property type="entry name" value="PKD"/>
    <property type="match status" value="1"/>
</dbReference>
<proteinExistence type="evidence at protein level"/>
<protein>
    <recommendedName>
        <fullName>VPS10 domain-containing receptor SorCS3</fullName>
    </recommendedName>
</protein>
<organism>
    <name type="scientific">Mus musculus</name>
    <name type="common">Mouse</name>
    <dbReference type="NCBI Taxonomy" id="10090"/>
    <lineage>
        <taxon>Eukaryota</taxon>
        <taxon>Metazoa</taxon>
        <taxon>Chordata</taxon>
        <taxon>Craniata</taxon>
        <taxon>Vertebrata</taxon>
        <taxon>Euteleostomi</taxon>
        <taxon>Mammalia</taxon>
        <taxon>Eutheria</taxon>
        <taxon>Euarchontoglires</taxon>
        <taxon>Glires</taxon>
        <taxon>Rodentia</taxon>
        <taxon>Myomorpha</taxon>
        <taxon>Muroidea</taxon>
        <taxon>Muridae</taxon>
        <taxon>Murinae</taxon>
        <taxon>Mus</taxon>
        <taxon>Mus</taxon>
    </lineage>
</organism>
<sequence>MEAAGTERPAGWPGAPLARTGLLLLSTWVLAGAEITWGATGGPGRLVSPASRPPVLPPLLPRAAENRWPEELASARRAAAPRRRSRLEPLSQASRGEIRTEAAGMSPEGARWVPGIPSPSQAGSARRTRRAQPPSPLERGDSWATALADGAKGSRPHTKGSREEVRATRTGGASTEELRLPSTSFALTGDSAHNQAMVHWSGHNSSVILILTKLYDFNLGSVTESSLWRSVDYGATYEKLNDKVGLKTVLSYLYVNPTNKRKIMLLSDPEMESSVLISSDEGATYQKYRLTFYIQSLLFHPKQEDWVLAYSLDQKLYSSMDFGRRWQLMHERITPNRFYWSVSGLDKEADLVHMEVRTADGYAHYLTCRIQECAETTRSGPFARSIDISSLVVQDEYIFIQVTIGGRASYYVSYRREAFAQIKLPKYSLPKDMHIISTDENQVFAAVQEWNQNDTYNLYISDTRGIYFTLAMENIKSSRGLMGNIIIELYEVAGIKGIFLANKKVDDQVKTYITYNKGRDWRLLQAPDVDLRGSPVHCLLPFCSLHLHLQLSENPYSSGRISSKDTAPGLVVATGNIGSELSYTDIGVFISSDGGNTWRQIFDEEYNVWFLDWGGALVAMKHTPLPVRHLWVSFDEGHSWDKYGFTLLPLFVDGALVEAGVETHIMTVFGHFSLRSEWQLVKVDYKSIFSRRCTKEDFETWHLLNQGEPCVMGERKIFKKRKPGAQCALGREYSGSVVSEPCVCADWDFECDYGYERHGESQCVPAFWYNPASPSKDCSLGQSYLNSTGYRRIVSNNCTDGLRDKYSAKTQLCPGKAPRGLHVVTTDGRLVAEQGHNATFIILMEEGDLQRTNIQLDFGDGVAVSYANFSPIEDGIRHVYKSAGIFQVTAYAENNLGSDTAFLFLHVVCPVEHVHLRVPFVAIRNKDVNISAVVWPSQLGTLTYFWWFGNSTKPLITLDSSISFTFLAEGTNTITVQVAAGNALIQDTKEIAVHEYFQSQLLSFSPNLDYHNPDIPEWRQDIGNVIKRALIKVTSVPEDQILVAVFPGLPTSAELFILPPKNLTERRKGHEGDLEQIVETLFNALNQNLVQFELKPGVQVIVYVTQLTLAPLVDSSAGHSSSAMLMLLSVVFVGLAVFLIYKFKRKIPWINIYAQVQHDKEQEMIGSVSQSENAPKITLSDFTEPEELLDKELDTRVIGSIATIASSESTKEIPNCTSV</sequence>
<keyword id="KW-1003">Cell membrane</keyword>
<keyword id="KW-0903">Direct protein sequencing</keyword>
<keyword id="KW-0325">Glycoprotein</keyword>
<keyword id="KW-0472">Membrane</keyword>
<keyword id="KW-1185">Reference proteome</keyword>
<keyword id="KW-0677">Repeat</keyword>
<keyword id="KW-0732">Signal</keyword>
<keyword id="KW-0770">Synapse</keyword>
<keyword id="KW-0812">Transmembrane</keyword>
<keyword id="KW-1133">Transmembrane helix</keyword>
<reference key="1">
    <citation type="submission" date="2000-06" db="EMBL/GenBank/DDBJ databases">
        <title>Cloning of a novel vps10 domain receptor.</title>
        <authorList>
            <person name="Hermey G."/>
            <person name="Rezgaoui M."/>
            <person name="Hermans-Borgmeyer I."/>
        </authorList>
    </citation>
    <scope>NUCLEOTIDE SEQUENCE [MRNA]</scope>
    <source>
        <strain>C57BL/6J</strain>
    </source>
</reference>
<reference key="2">
    <citation type="submission" date="2009-01" db="UniProtKB">
        <authorList>
            <person name="Lubec G."/>
            <person name="Sunyer B."/>
            <person name="Chen W.-Q."/>
        </authorList>
    </citation>
    <scope>PROTEIN SEQUENCE OF 244-261</scope>
    <scope>IDENTIFICATION BY MASS SPECTROMETRY</scope>
    <source>
        <strain>OF1</strain>
        <tissue>Hippocampus</tissue>
    </source>
</reference>
<reference key="3">
    <citation type="journal article" date="2005" name="Science">
        <title>The transcriptional landscape of the mammalian genome.</title>
        <authorList>
            <person name="Carninci P."/>
            <person name="Kasukawa T."/>
            <person name="Katayama S."/>
            <person name="Gough J."/>
            <person name="Frith M.C."/>
            <person name="Maeda N."/>
            <person name="Oyama R."/>
            <person name="Ravasi T."/>
            <person name="Lenhard B."/>
            <person name="Wells C."/>
            <person name="Kodzius R."/>
            <person name="Shimokawa K."/>
            <person name="Bajic V.B."/>
            <person name="Brenner S.E."/>
            <person name="Batalov S."/>
            <person name="Forrest A.R."/>
            <person name="Zavolan M."/>
            <person name="Davis M.J."/>
            <person name="Wilming L.G."/>
            <person name="Aidinis V."/>
            <person name="Allen J.E."/>
            <person name="Ambesi-Impiombato A."/>
            <person name="Apweiler R."/>
            <person name="Aturaliya R.N."/>
            <person name="Bailey T.L."/>
            <person name="Bansal M."/>
            <person name="Baxter L."/>
            <person name="Beisel K.W."/>
            <person name="Bersano T."/>
            <person name="Bono H."/>
            <person name="Chalk A.M."/>
            <person name="Chiu K.P."/>
            <person name="Choudhary V."/>
            <person name="Christoffels A."/>
            <person name="Clutterbuck D.R."/>
            <person name="Crowe M.L."/>
            <person name="Dalla E."/>
            <person name="Dalrymple B.P."/>
            <person name="de Bono B."/>
            <person name="Della Gatta G."/>
            <person name="di Bernardo D."/>
            <person name="Down T."/>
            <person name="Engstrom P."/>
            <person name="Fagiolini M."/>
            <person name="Faulkner G."/>
            <person name="Fletcher C.F."/>
            <person name="Fukushima T."/>
            <person name="Furuno M."/>
            <person name="Futaki S."/>
            <person name="Gariboldi M."/>
            <person name="Georgii-Hemming P."/>
            <person name="Gingeras T.R."/>
            <person name="Gojobori T."/>
            <person name="Green R.E."/>
            <person name="Gustincich S."/>
            <person name="Harbers M."/>
            <person name="Hayashi Y."/>
            <person name="Hensch T.K."/>
            <person name="Hirokawa N."/>
            <person name="Hill D."/>
            <person name="Huminiecki L."/>
            <person name="Iacono M."/>
            <person name="Ikeo K."/>
            <person name="Iwama A."/>
            <person name="Ishikawa T."/>
            <person name="Jakt M."/>
            <person name="Kanapin A."/>
            <person name="Katoh M."/>
            <person name="Kawasawa Y."/>
            <person name="Kelso J."/>
            <person name="Kitamura H."/>
            <person name="Kitano H."/>
            <person name="Kollias G."/>
            <person name="Krishnan S.P."/>
            <person name="Kruger A."/>
            <person name="Kummerfeld S.K."/>
            <person name="Kurochkin I.V."/>
            <person name="Lareau L.F."/>
            <person name="Lazarevic D."/>
            <person name="Lipovich L."/>
            <person name="Liu J."/>
            <person name="Liuni S."/>
            <person name="McWilliam S."/>
            <person name="Madan Babu M."/>
            <person name="Madera M."/>
            <person name="Marchionni L."/>
            <person name="Matsuda H."/>
            <person name="Matsuzawa S."/>
            <person name="Miki H."/>
            <person name="Mignone F."/>
            <person name="Miyake S."/>
            <person name="Morris K."/>
            <person name="Mottagui-Tabar S."/>
            <person name="Mulder N."/>
            <person name="Nakano N."/>
            <person name="Nakauchi H."/>
            <person name="Ng P."/>
            <person name="Nilsson R."/>
            <person name="Nishiguchi S."/>
            <person name="Nishikawa S."/>
            <person name="Nori F."/>
            <person name="Ohara O."/>
            <person name="Okazaki Y."/>
            <person name="Orlando V."/>
            <person name="Pang K.C."/>
            <person name="Pavan W.J."/>
            <person name="Pavesi G."/>
            <person name="Pesole G."/>
            <person name="Petrovsky N."/>
            <person name="Piazza S."/>
            <person name="Reed J."/>
            <person name="Reid J.F."/>
            <person name="Ring B.Z."/>
            <person name="Ringwald M."/>
            <person name="Rost B."/>
            <person name="Ruan Y."/>
            <person name="Salzberg S.L."/>
            <person name="Sandelin A."/>
            <person name="Schneider C."/>
            <person name="Schoenbach C."/>
            <person name="Sekiguchi K."/>
            <person name="Semple C.A."/>
            <person name="Seno S."/>
            <person name="Sessa L."/>
            <person name="Sheng Y."/>
            <person name="Shibata Y."/>
            <person name="Shimada H."/>
            <person name="Shimada K."/>
            <person name="Silva D."/>
            <person name="Sinclair B."/>
            <person name="Sperling S."/>
            <person name="Stupka E."/>
            <person name="Sugiura K."/>
            <person name="Sultana R."/>
            <person name="Takenaka Y."/>
            <person name="Taki K."/>
            <person name="Tammoja K."/>
            <person name="Tan S.L."/>
            <person name="Tang S."/>
            <person name="Taylor M.S."/>
            <person name="Tegner J."/>
            <person name="Teichmann S.A."/>
            <person name="Ueda H.R."/>
            <person name="van Nimwegen E."/>
            <person name="Verardo R."/>
            <person name="Wei C.L."/>
            <person name="Yagi K."/>
            <person name="Yamanishi H."/>
            <person name="Zabarovsky E."/>
            <person name="Zhu S."/>
            <person name="Zimmer A."/>
            <person name="Hide W."/>
            <person name="Bult C."/>
            <person name="Grimmond S.M."/>
            <person name="Teasdale R.D."/>
            <person name="Liu E.T."/>
            <person name="Brusic V."/>
            <person name="Quackenbush J."/>
            <person name="Wahlestedt C."/>
            <person name="Mattick J.S."/>
            <person name="Hume D.A."/>
            <person name="Kai C."/>
            <person name="Sasaki D."/>
            <person name="Tomaru Y."/>
            <person name="Fukuda S."/>
            <person name="Kanamori-Katayama M."/>
            <person name="Suzuki M."/>
            <person name="Aoki J."/>
            <person name="Arakawa T."/>
            <person name="Iida J."/>
            <person name="Imamura K."/>
            <person name="Itoh M."/>
            <person name="Kato T."/>
            <person name="Kawaji H."/>
            <person name="Kawagashira N."/>
            <person name="Kawashima T."/>
            <person name="Kojima M."/>
            <person name="Kondo S."/>
            <person name="Konno H."/>
            <person name="Nakano K."/>
            <person name="Ninomiya N."/>
            <person name="Nishio T."/>
            <person name="Okada M."/>
            <person name="Plessy C."/>
            <person name="Shibata K."/>
            <person name="Shiraki T."/>
            <person name="Suzuki S."/>
            <person name="Tagami M."/>
            <person name="Waki K."/>
            <person name="Watahiki A."/>
            <person name="Okamura-Oho Y."/>
            <person name="Suzuki H."/>
            <person name="Kawai J."/>
            <person name="Hayashizaki Y."/>
        </authorList>
    </citation>
    <scope>NUCLEOTIDE SEQUENCE [LARGE SCALE MRNA] OF 1191-1219</scope>
    <source>
        <strain>C57BL/6J</strain>
        <tissue>Hypothalamus</tissue>
    </source>
</reference>
<reference key="4">
    <citation type="journal article" date="2010" name="Cell">
        <title>A tissue-specific atlas of mouse protein phosphorylation and expression.</title>
        <authorList>
            <person name="Huttlin E.L."/>
            <person name="Jedrychowski M.P."/>
            <person name="Elias J.E."/>
            <person name="Goswami T."/>
            <person name="Rad R."/>
            <person name="Beausoleil S.A."/>
            <person name="Villen J."/>
            <person name="Haas W."/>
            <person name="Sowa M.E."/>
            <person name="Gygi S.P."/>
        </authorList>
    </citation>
    <scope>IDENTIFICATION BY MASS SPECTROMETRY [LARGE SCALE ANALYSIS]</scope>
    <source>
        <tissue>Brain</tissue>
    </source>
</reference>
<reference key="5">
    <citation type="journal article" date="2013" name="PLoS ONE">
        <title>Sortilin-related receptor SORCS3 is a postsynaptic modulator of synaptic depression and fear extinction.</title>
        <authorList>
            <person name="Breiderhoff T."/>
            <person name="Christiansen G.B."/>
            <person name="Pallesen L.T."/>
            <person name="Vaegter C."/>
            <person name="Nykjaer A."/>
            <person name="Holm M.M."/>
            <person name="Glerup S."/>
            <person name="Willnow T.E."/>
        </authorList>
    </citation>
    <scope>FUNCTION</scope>
    <scope>DISRUPTION PHENOTYPE</scope>
    <scope>SUBCELLULAR LOCATION</scope>
    <scope>TISSUE SPECIFICITY</scope>
    <scope>INTERACTION WITH DLG4 AND PICK1</scope>
</reference>
<reference key="6">
    <citation type="journal article" date="2017" name="Hippocampus">
        <title>The sorting receptor SorCS3 is a stronger regulator of glutamate receptor functions compared to GABAergic mechanisms in the hippocampus.</title>
        <authorList>
            <person name="Christiansen G.B."/>
            <person name="Andersen K.H."/>
            <person name="Riis S."/>
            <person name="Nykjaer A."/>
            <person name="Bolcho U."/>
            <person name="Jensen M.S."/>
            <person name="Holm M.M."/>
        </authorList>
    </citation>
    <scope>FUNCTION</scope>
    <scope>DISRUPTION PHENOTYPE</scope>
    <scope>TISSUE SPECIFICITY</scope>
</reference>
<evidence type="ECO:0000250" key="1">
    <source>
        <dbReference type="UniProtKB" id="Q9UPU3"/>
    </source>
</evidence>
<evidence type="ECO:0000255" key="2"/>
<evidence type="ECO:0000255" key="3">
    <source>
        <dbReference type="PROSITE-ProRule" id="PRU00151"/>
    </source>
</evidence>
<evidence type="ECO:0000256" key="4">
    <source>
        <dbReference type="SAM" id="MobiDB-lite"/>
    </source>
</evidence>
<evidence type="ECO:0000269" key="5">
    <source>
    </source>
</evidence>
<evidence type="ECO:0000269" key="6">
    <source>
    </source>
</evidence>
<evidence type="ECO:0000305" key="7"/>
<comment type="function">
    <text evidence="5 6">Plays an important role in modulating synaptic transmission and plasticity in the hippocampus, probably by affecting the trafficking and localization of AMPA-type glutamate receptors in the postsynaptic density.</text>
</comment>
<comment type="subunit">
    <text evidence="1 5">Homodimer (By similarity). Interacts with NGF (By similarity). Interacts with DLG4/PSD95 and PICK1 (PubMed:24069373).</text>
</comment>
<comment type="subcellular location">
    <subcellularLocation>
        <location evidence="5">Cell membrane</location>
        <topology evidence="2">Single-pass type I membrane protein</topology>
    </subcellularLocation>
    <subcellularLocation>
        <location evidence="5">Synaptic cell membrane</location>
        <topology evidence="2">Single-pass type I membrane protein</topology>
    </subcellularLocation>
    <subcellularLocation>
        <location evidence="5">Postsynaptic density</location>
    </subcellularLocation>
</comment>
<comment type="tissue specificity">
    <text evidence="5 6">Brain (at protein level).</text>
</comment>
<comment type="disruption phenotype">
    <text evidence="5 6">Mice show impairments in synaptic plasticity, particularly with a loss of long-term synaptic depression in the hippocampus while maintaining normal long-term potentiation (PubMed:24069373). Pronounced deficits in spatial learning and memory, and accelerated extinction of fear memories seen (PubMed:24069373). Significant reduction in basal synaptic transmission, particularly in the CA1 region of the hippocampus, with more pronounced effects observed in young adult mice compared to juveniles (PubMed:27935149). Altered short-term plasticity, marked by increased facilitation and reduced synaptic depression during repetitive stimuli (PubMed:27935149).</text>
</comment>
<comment type="similarity">
    <text evidence="7">Belongs to the VPS10-related sortilin family. SORCS subfamily.</text>
</comment>
<name>SORC3_MOUSE</name>
<accession>Q8VI51</accession>
<accession>Q9CTR4</accession>